<name>HSCA_AERS4</name>
<evidence type="ECO:0000255" key="1">
    <source>
        <dbReference type="HAMAP-Rule" id="MF_00679"/>
    </source>
</evidence>
<keyword id="KW-0067">ATP-binding</keyword>
<keyword id="KW-0143">Chaperone</keyword>
<keyword id="KW-0547">Nucleotide-binding</keyword>
<comment type="function">
    <text evidence="1">Chaperone involved in the maturation of iron-sulfur cluster-containing proteins. Has a low intrinsic ATPase activity which is markedly stimulated by HscB.</text>
</comment>
<comment type="similarity">
    <text evidence="1">Belongs to the heat shock protein 70 family.</text>
</comment>
<organism>
    <name type="scientific">Aeromonas salmonicida (strain A449)</name>
    <dbReference type="NCBI Taxonomy" id="382245"/>
    <lineage>
        <taxon>Bacteria</taxon>
        <taxon>Pseudomonadati</taxon>
        <taxon>Pseudomonadota</taxon>
        <taxon>Gammaproteobacteria</taxon>
        <taxon>Aeromonadales</taxon>
        <taxon>Aeromonadaceae</taxon>
        <taxon>Aeromonas</taxon>
    </lineage>
</organism>
<dbReference type="EMBL" id="CP000644">
    <property type="protein sequence ID" value="ABO90631.1"/>
    <property type="molecule type" value="Genomic_DNA"/>
</dbReference>
<dbReference type="RefSeq" id="WP_005310412.1">
    <property type="nucleotide sequence ID" value="NC_009348.1"/>
</dbReference>
<dbReference type="SMR" id="A4SP09"/>
<dbReference type="STRING" id="29491.GCA_000820065_00274"/>
<dbReference type="KEGG" id="asa:ASA_2607"/>
<dbReference type="eggNOG" id="COG0443">
    <property type="taxonomic scope" value="Bacteria"/>
</dbReference>
<dbReference type="HOGENOM" id="CLU_005965_2_4_6"/>
<dbReference type="Proteomes" id="UP000000225">
    <property type="component" value="Chromosome"/>
</dbReference>
<dbReference type="GO" id="GO:0005524">
    <property type="term" value="F:ATP binding"/>
    <property type="evidence" value="ECO:0007669"/>
    <property type="project" value="UniProtKB-KW"/>
</dbReference>
<dbReference type="GO" id="GO:0016887">
    <property type="term" value="F:ATP hydrolysis activity"/>
    <property type="evidence" value="ECO:0007669"/>
    <property type="project" value="UniProtKB-UniRule"/>
</dbReference>
<dbReference type="GO" id="GO:0140662">
    <property type="term" value="F:ATP-dependent protein folding chaperone"/>
    <property type="evidence" value="ECO:0007669"/>
    <property type="project" value="InterPro"/>
</dbReference>
<dbReference type="GO" id="GO:0051082">
    <property type="term" value="F:unfolded protein binding"/>
    <property type="evidence" value="ECO:0007669"/>
    <property type="project" value="InterPro"/>
</dbReference>
<dbReference type="GO" id="GO:0016226">
    <property type="term" value="P:iron-sulfur cluster assembly"/>
    <property type="evidence" value="ECO:0007669"/>
    <property type="project" value="InterPro"/>
</dbReference>
<dbReference type="CDD" id="cd10236">
    <property type="entry name" value="ASKHA_NBD_HSP70_HscA"/>
    <property type="match status" value="1"/>
</dbReference>
<dbReference type="FunFam" id="3.30.420.40:FF:000046">
    <property type="entry name" value="Chaperone protein HscA"/>
    <property type="match status" value="1"/>
</dbReference>
<dbReference type="FunFam" id="2.60.34.10:FF:000005">
    <property type="entry name" value="Chaperone protein HscA homolog"/>
    <property type="match status" value="1"/>
</dbReference>
<dbReference type="Gene3D" id="1.20.1270.10">
    <property type="match status" value="1"/>
</dbReference>
<dbReference type="Gene3D" id="3.30.420.40">
    <property type="match status" value="2"/>
</dbReference>
<dbReference type="Gene3D" id="3.90.640.10">
    <property type="entry name" value="Actin, Chain A, domain 4"/>
    <property type="match status" value="1"/>
</dbReference>
<dbReference type="Gene3D" id="2.60.34.10">
    <property type="entry name" value="Substrate Binding Domain Of DNAk, Chain A, domain 1"/>
    <property type="match status" value="1"/>
</dbReference>
<dbReference type="HAMAP" id="MF_00679">
    <property type="entry name" value="HscA"/>
    <property type="match status" value="1"/>
</dbReference>
<dbReference type="InterPro" id="IPR043129">
    <property type="entry name" value="ATPase_NBD"/>
</dbReference>
<dbReference type="InterPro" id="IPR018181">
    <property type="entry name" value="Heat_shock_70_CS"/>
</dbReference>
<dbReference type="InterPro" id="IPR042039">
    <property type="entry name" value="HscA_NBD"/>
</dbReference>
<dbReference type="InterPro" id="IPR029048">
    <property type="entry name" value="HSP70_C_sf"/>
</dbReference>
<dbReference type="InterPro" id="IPR029047">
    <property type="entry name" value="HSP70_peptide-bd_sf"/>
</dbReference>
<dbReference type="InterPro" id="IPR013126">
    <property type="entry name" value="Hsp_70_fam"/>
</dbReference>
<dbReference type="InterPro" id="IPR010236">
    <property type="entry name" value="ISC_FeS_clus_asmbl_HscA"/>
</dbReference>
<dbReference type="NCBIfam" id="TIGR01991">
    <property type="entry name" value="HscA"/>
    <property type="match status" value="1"/>
</dbReference>
<dbReference type="NCBIfam" id="NF003520">
    <property type="entry name" value="PRK05183.1"/>
    <property type="match status" value="1"/>
</dbReference>
<dbReference type="PANTHER" id="PTHR19375">
    <property type="entry name" value="HEAT SHOCK PROTEIN 70KDA"/>
    <property type="match status" value="1"/>
</dbReference>
<dbReference type="Pfam" id="PF00012">
    <property type="entry name" value="HSP70"/>
    <property type="match status" value="1"/>
</dbReference>
<dbReference type="PRINTS" id="PR00301">
    <property type="entry name" value="HEATSHOCK70"/>
</dbReference>
<dbReference type="SUPFAM" id="SSF53067">
    <property type="entry name" value="Actin-like ATPase domain"/>
    <property type="match status" value="2"/>
</dbReference>
<dbReference type="SUPFAM" id="SSF100934">
    <property type="entry name" value="Heat shock protein 70kD (HSP70), C-terminal subdomain"/>
    <property type="match status" value="1"/>
</dbReference>
<dbReference type="SUPFAM" id="SSF100920">
    <property type="entry name" value="Heat shock protein 70kD (HSP70), peptide-binding domain"/>
    <property type="match status" value="1"/>
</dbReference>
<dbReference type="PROSITE" id="PS00297">
    <property type="entry name" value="HSP70_1"/>
    <property type="match status" value="1"/>
</dbReference>
<dbReference type="PROSITE" id="PS00329">
    <property type="entry name" value="HSP70_2"/>
    <property type="match status" value="1"/>
</dbReference>
<dbReference type="PROSITE" id="PS01036">
    <property type="entry name" value="HSP70_3"/>
    <property type="match status" value="1"/>
</dbReference>
<proteinExistence type="inferred from homology"/>
<sequence>MALLQIAEPGQSAAPHQHKRAVGIDLGTTNSLVAAVRSGHADTLCDEQGRDLLPSVVHYQVDAIRVGFDAKREASLDPHNTIVSAKRMMGKALADIDTRQQPYEFVAADNGMPQLQTRQGLVNPVQVSAEILKKLAERGAAALGGELDGVVITVPAYFDDAQRQGTKDAARLAGLHVLRLLNEPTAAAIAYGLDSGQEGVIAVYDLGGGTFDISILRLHRGVFEVMATGGDSALGGDDFDHLLADWIKAQAGLEGQLDASTQRELLDVAAAVKHGLTDADLVPCAFAGWQGEVSRHLFEELITPLVKRTLLACRRALRDAGLEQVEVLEVVMVGGSTRVPLVRERVGEFFQRTPLTSIDPDKVVAIGAAIQADILVGNKPDAEMLLLDVIPLSLGLETMGGLAEKVIPRNTTIPVARAQEFTTFKDGQTAMAIHVVQGERELVADCRSLARFTLTGIPPMAAGAAHIRVTFQVDADGLLSVSAMEKSSGVQAEIQVKPSYGLGEEDILTMLSASIANAQQDMDARMLAEQQVEADRVVESLNAALAADGDALLSTAERAAIDSAITHVLSVRAAGTTNQIKDAIEAADAVSGEFAARRMDASIRKVLTGQNVNKV</sequence>
<gene>
    <name evidence="1" type="primary">hscA</name>
    <name type="ordered locus">ASA_2607</name>
</gene>
<protein>
    <recommendedName>
        <fullName evidence="1">Chaperone protein HscA homolog</fullName>
    </recommendedName>
</protein>
<reference key="1">
    <citation type="journal article" date="2008" name="BMC Genomics">
        <title>The genome of Aeromonas salmonicida subsp. salmonicida A449: insights into the evolution of a fish pathogen.</title>
        <authorList>
            <person name="Reith M.E."/>
            <person name="Singh R.K."/>
            <person name="Curtis B."/>
            <person name="Boyd J.M."/>
            <person name="Bouevitch A."/>
            <person name="Kimball J."/>
            <person name="Munholland J."/>
            <person name="Murphy C."/>
            <person name="Sarty D."/>
            <person name="Williams J."/>
            <person name="Nash J.H."/>
            <person name="Johnson S.C."/>
            <person name="Brown L.L."/>
        </authorList>
    </citation>
    <scope>NUCLEOTIDE SEQUENCE [LARGE SCALE GENOMIC DNA]</scope>
    <source>
        <strain>A449</strain>
    </source>
</reference>
<feature type="chain" id="PRO_1000044841" description="Chaperone protein HscA homolog">
    <location>
        <begin position="1"/>
        <end position="615"/>
    </location>
</feature>
<accession>A4SP09</accession>